<name>XERC_RICB8</name>
<sequence length="305" mass="35491">MLDTQIQELIIKWQKYLSLQKNYSNHTLISYNNDLKHFLEFMNYYNSDIVTMDYIKAADIRLMRSWLAKRKCDNFVTSSIARGLSAIKNFYKFLEKTAELHNHVVFSIKSPKKSKLLPKALSEEEVNISLDHIEEYGNSQWIEIRNKALLVLIYASGLRISEALSITKLHLQNLEFIKIMGKGSKERVIPWLAIARNLITEYLEKLPYELKDDEPIFRGKQGKKLQPPVFNRELIKLKRFYGLPEHLSAHSFRHSFASHLLENGADLRSIQELLGHKSLSTTQSYTKTSIKHLETAYVTAHPIKK</sequence>
<protein>
    <recommendedName>
        <fullName evidence="1">Tyrosine recombinase XerC</fullName>
    </recommendedName>
</protein>
<reference key="1">
    <citation type="submission" date="2007-09" db="EMBL/GenBank/DDBJ databases">
        <title>Complete genome sequencing of Rickettsia bellii.</title>
        <authorList>
            <person name="Madan A."/>
            <person name="Lee H."/>
            <person name="Madan A."/>
            <person name="Yoon J.-G."/>
            <person name="Ryu G.-Y."/>
            <person name="Dasch G."/>
            <person name="Ereemeva M."/>
        </authorList>
    </citation>
    <scope>NUCLEOTIDE SEQUENCE [LARGE SCALE GENOMIC DNA]</scope>
    <source>
        <strain>OSU 85-389</strain>
    </source>
</reference>
<gene>
    <name evidence="1" type="primary">xerC</name>
    <name type="ordered locus">A1I_06985</name>
</gene>
<feature type="chain" id="PRO_1000070033" description="Tyrosine recombinase XerC">
    <location>
        <begin position="1"/>
        <end position="305"/>
    </location>
</feature>
<feature type="domain" description="Core-binding (CB)" evidence="3">
    <location>
        <begin position="4"/>
        <end position="95"/>
    </location>
</feature>
<feature type="domain" description="Tyr recombinase" evidence="2">
    <location>
        <begin position="116"/>
        <end position="298"/>
    </location>
</feature>
<feature type="active site" evidence="1">
    <location>
        <position position="159"/>
    </location>
</feature>
<feature type="active site" evidence="1">
    <location>
        <position position="182"/>
    </location>
</feature>
<feature type="active site" evidence="1">
    <location>
        <position position="250"/>
    </location>
</feature>
<feature type="active site" evidence="1">
    <location>
        <position position="253"/>
    </location>
</feature>
<feature type="active site" evidence="1">
    <location>
        <position position="276"/>
    </location>
</feature>
<feature type="active site" description="O-(3'-phospho-DNA)-tyrosine intermediate" evidence="1">
    <location>
        <position position="285"/>
    </location>
</feature>
<comment type="function">
    <text evidence="1">Site-specific tyrosine recombinase, which acts by catalyzing the cutting and rejoining of the recombining DNA molecules. The XerC-XerD complex is essential to convert dimers of the bacterial chromosome into monomers to permit their segregation at cell division. It also contributes to the segregational stability of plasmids.</text>
</comment>
<comment type="subunit">
    <text evidence="1">Forms a cyclic heterotetrameric complex composed of two molecules of XerC and two molecules of XerD.</text>
</comment>
<comment type="subcellular location">
    <subcellularLocation>
        <location evidence="1">Cytoplasm</location>
    </subcellularLocation>
</comment>
<comment type="similarity">
    <text evidence="1">Belongs to the 'phage' integrase family. XerC subfamily.</text>
</comment>
<accession>A8GXV3</accession>
<keyword id="KW-0131">Cell cycle</keyword>
<keyword id="KW-0132">Cell division</keyword>
<keyword id="KW-0159">Chromosome partition</keyword>
<keyword id="KW-0963">Cytoplasm</keyword>
<keyword id="KW-0229">DNA integration</keyword>
<keyword id="KW-0233">DNA recombination</keyword>
<keyword id="KW-0238">DNA-binding</keyword>
<proteinExistence type="inferred from homology"/>
<dbReference type="EMBL" id="CP000849">
    <property type="protein sequence ID" value="ABV79703.1"/>
    <property type="molecule type" value="Genomic_DNA"/>
</dbReference>
<dbReference type="RefSeq" id="WP_012152200.1">
    <property type="nucleotide sequence ID" value="NC_009883.1"/>
</dbReference>
<dbReference type="SMR" id="A8GXV3"/>
<dbReference type="KEGG" id="rbo:A1I_06985"/>
<dbReference type="HOGENOM" id="CLU_027562_9_0_5"/>
<dbReference type="GO" id="GO:0005737">
    <property type="term" value="C:cytoplasm"/>
    <property type="evidence" value="ECO:0007669"/>
    <property type="project" value="UniProtKB-SubCell"/>
</dbReference>
<dbReference type="GO" id="GO:0003677">
    <property type="term" value="F:DNA binding"/>
    <property type="evidence" value="ECO:0007669"/>
    <property type="project" value="UniProtKB-KW"/>
</dbReference>
<dbReference type="GO" id="GO:0009037">
    <property type="term" value="F:tyrosine-based site-specific recombinase activity"/>
    <property type="evidence" value="ECO:0007669"/>
    <property type="project" value="UniProtKB-UniRule"/>
</dbReference>
<dbReference type="GO" id="GO:0051301">
    <property type="term" value="P:cell division"/>
    <property type="evidence" value="ECO:0007669"/>
    <property type="project" value="UniProtKB-KW"/>
</dbReference>
<dbReference type="GO" id="GO:0007059">
    <property type="term" value="P:chromosome segregation"/>
    <property type="evidence" value="ECO:0007669"/>
    <property type="project" value="UniProtKB-UniRule"/>
</dbReference>
<dbReference type="GO" id="GO:0006313">
    <property type="term" value="P:DNA transposition"/>
    <property type="evidence" value="ECO:0007669"/>
    <property type="project" value="UniProtKB-UniRule"/>
</dbReference>
<dbReference type="CDD" id="cd00798">
    <property type="entry name" value="INT_XerDC_C"/>
    <property type="match status" value="1"/>
</dbReference>
<dbReference type="Gene3D" id="1.10.150.130">
    <property type="match status" value="1"/>
</dbReference>
<dbReference type="Gene3D" id="1.10.443.10">
    <property type="entry name" value="Intergrase catalytic core"/>
    <property type="match status" value="1"/>
</dbReference>
<dbReference type="HAMAP" id="MF_01808">
    <property type="entry name" value="Recomb_XerC_XerD"/>
    <property type="match status" value="1"/>
</dbReference>
<dbReference type="InterPro" id="IPR044068">
    <property type="entry name" value="CB"/>
</dbReference>
<dbReference type="InterPro" id="IPR011010">
    <property type="entry name" value="DNA_brk_join_enz"/>
</dbReference>
<dbReference type="InterPro" id="IPR013762">
    <property type="entry name" value="Integrase-like_cat_sf"/>
</dbReference>
<dbReference type="InterPro" id="IPR002104">
    <property type="entry name" value="Integrase_catalytic"/>
</dbReference>
<dbReference type="InterPro" id="IPR010998">
    <property type="entry name" value="Integrase_recombinase_N"/>
</dbReference>
<dbReference type="InterPro" id="IPR004107">
    <property type="entry name" value="Integrase_SAM-like_N"/>
</dbReference>
<dbReference type="InterPro" id="IPR023009">
    <property type="entry name" value="Tyrosine_recombinase_XerC/XerD"/>
</dbReference>
<dbReference type="InterPro" id="IPR050090">
    <property type="entry name" value="Tyrosine_recombinase_XerCD"/>
</dbReference>
<dbReference type="PANTHER" id="PTHR30349">
    <property type="entry name" value="PHAGE INTEGRASE-RELATED"/>
    <property type="match status" value="1"/>
</dbReference>
<dbReference type="PANTHER" id="PTHR30349:SF90">
    <property type="entry name" value="TYROSINE RECOMBINASE XERD"/>
    <property type="match status" value="1"/>
</dbReference>
<dbReference type="Pfam" id="PF02899">
    <property type="entry name" value="Phage_int_SAM_1"/>
    <property type="match status" value="1"/>
</dbReference>
<dbReference type="Pfam" id="PF00589">
    <property type="entry name" value="Phage_integrase"/>
    <property type="match status" value="1"/>
</dbReference>
<dbReference type="SUPFAM" id="SSF56349">
    <property type="entry name" value="DNA breaking-rejoining enzymes"/>
    <property type="match status" value="1"/>
</dbReference>
<dbReference type="PROSITE" id="PS51900">
    <property type="entry name" value="CB"/>
    <property type="match status" value="1"/>
</dbReference>
<dbReference type="PROSITE" id="PS51898">
    <property type="entry name" value="TYR_RECOMBINASE"/>
    <property type="match status" value="1"/>
</dbReference>
<organism>
    <name type="scientific">Rickettsia bellii (strain OSU 85-389)</name>
    <dbReference type="NCBI Taxonomy" id="391896"/>
    <lineage>
        <taxon>Bacteria</taxon>
        <taxon>Pseudomonadati</taxon>
        <taxon>Pseudomonadota</taxon>
        <taxon>Alphaproteobacteria</taxon>
        <taxon>Rickettsiales</taxon>
        <taxon>Rickettsiaceae</taxon>
        <taxon>Rickettsieae</taxon>
        <taxon>Rickettsia</taxon>
        <taxon>belli group</taxon>
    </lineage>
</organism>
<evidence type="ECO:0000255" key="1">
    <source>
        <dbReference type="HAMAP-Rule" id="MF_01808"/>
    </source>
</evidence>
<evidence type="ECO:0000255" key="2">
    <source>
        <dbReference type="PROSITE-ProRule" id="PRU01246"/>
    </source>
</evidence>
<evidence type="ECO:0000255" key="3">
    <source>
        <dbReference type="PROSITE-ProRule" id="PRU01248"/>
    </source>
</evidence>